<accession>Q04EI9</accession>
<sequence length="157" mass="17396">MVKAVFPGSFDPLTFGHLDVISRSALLFDQVIVAVGINTSKTAMFTTEEKITLISNNTKNLKNVSVLPMPDLTFKFVSSVGADVIVRGIRNVRDYEYERDIAEINHRLGNVDTVLLPSKAVYQDISSSNLKEVAKFGADISHFVPENVIKLIKLKTK</sequence>
<gene>
    <name evidence="1" type="primary">coaD</name>
    <name type="ordered locus">OEOE_1259</name>
</gene>
<feature type="chain" id="PRO_1000011193" description="Phosphopantetheine adenylyltransferase">
    <location>
        <begin position="1"/>
        <end position="157"/>
    </location>
</feature>
<feature type="binding site" evidence="1">
    <location>
        <begin position="9"/>
        <end position="10"/>
    </location>
    <ligand>
        <name>ATP</name>
        <dbReference type="ChEBI" id="CHEBI:30616"/>
    </ligand>
</feature>
<feature type="binding site" evidence="1">
    <location>
        <position position="9"/>
    </location>
    <ligand>
        <name>substrate</name>
    </ligand>
</feature>
<feature type="binding site" evidence="1">
    <location>
        <position position="17"/>
    </location>
    <ligand>
        <name>ATP</name>
        <dbReference type="ChEBI" id="CHEBI:30616"/>
    </ligand>
</feature>
<feature type="binding site" evidence="1">
    <location>
        <position position="41"/>
    </location>
    <ligand>
        <name>substrate</name>
    </ligand>
</feature>
<feature type="binding site" evidence="1">
    <location>
        <position position="73"/>
    </location>
    <ligand>
        <name>substrate</name>
    </ligand>
</feature>
<feature type="binding site" evidence="1">
    <location>
        <position position="87"/>
    </location>
    <ligand>
        <name>substrate</name>
    </ligand>
</feature>
<feature type="binding site" evidence="1">
    <location>
        <begin position="88"/>
        <end position="90"/>
    </location>
    <ligand>
        <name>ATP</name>
        <dbReference type="ChEBI" id="CHEBI:30616"/>
    </ligand>
</feature>
<feature type="binding site" evidence="1">
    <location>
        <position position="98"/>
    </location>
    <ligand>
        <name>ATP</name>
        <dbReference type="ChEBI" id="CHEBI:30616"/>
    </ligand>
</feature>
<feature type="binding site" evidence="1">
    <location>
        <begin position="122"/>
        <end position="128"/>
    </location>
    <ligand>
        <name>ATP</name>
        <dbReference type="ChEBI" id="CHEBI:30616"/>
    </ligand>
</feature>
<feature type="site" description="Transition state stabilizer" evidence="1">
    <location>
        <position position="17"/>
    </location>
</feature>
<proteinExistence type="inferred from homology"/>
<comment type="function">
    <text evidence="1">Reversibly transfers an adenylyl group from ATP to 4'-phosphopantetheine, yielding dephospho-CoA (dPCoA) and pyrophosphate.</text>
</comment>
<comment type="catalytic activity">
    <reaction evidence="1">
        <text>(R)-4'-phosphopantetheine + ATP + H(+) = 3'-dephospho-CoA + diphosphate</text>
        <dbReference type="Rhea" id="RHEA:19801"/>
        <dbReference type="ChEBI" id="CHEBI:15378"/>
        <dbReference type="ChEBI" id="CHEBI:30616"/>
        <dbReference type="ChEBI" id="CHEBI:33019"/>
        <dbReference type="ChEBI" id="CHEBI:57328"/>
        <dbReference type="ChEBI" id="CHEBI:61723"/>
        <dbReference type="EC" id="2.7.7.3"/>
    </reaction>
</comment>
<comment type="cofactor">
    <cofactor evidence="1">
        <name>Mg(2+)</name>
        <dbReference type="ChEBI" id="CHEBI:18420"/>
    </cofactor>
</comment>
<comment type="pathway">
    <text evidence="1">Cofactor biosynthesis; coenzyme A biosynthesis; CoA from (R)-pantothenate: step 4/5.</text>
</comment>
<comment type="subunit">
    <text evidence="1">Homohexamer.</text>
</comment>
<comment type="subcellular location">
    <subcellularLocation>
        <location evidence="1">Cytoplasm</location>
    </subcellularLocation>
</comment>
<comment type="similarity">
    <text evidence="1">Belongs to the bacterial CoaD family.</text>
</comment>
<organism>
    <name type="scientific">Oenococcus oeni (strain ATCC BAA-331 / PSU-1)</name>
    <dbReference type="NCBI Taxonomy" id="203123"/>
    <lineage>
        <taxon>Bacteria</taxon>
        <taxon>Bacillati</taxon>
        <taxon>Bacillota</taxon>
        <taxon>Bacilli</taxon>
        <taxon>Lactobacillales</taxon>
        <taxon>Lactobacillaceae</taxon>
        <taxon>Oenococcus</taxon>
    </lineage>
</organism>
<protein>
    <recommendedName>
        <fullName evidence="1">Phosphopantetheine adenylyltransferase</fullName>
        <ecNumber evidence="1">2.7.7.3</ecNumber>
    </recommendedName>
    <alternativeName>
        <fullName evidence="1">Dephospho-CoA pyrophosphorylase</fullName>
    </alternativeName>
    <alternativeName>
        <fullName evidence="1">Pantetheine-phosphate adenylyltransferase</fullName>
        <shortName evidence="1">PPAT</shortName>
    </alternativeName>
</protein>
<keyword id="KW-0067">ATP-binding</keyword>
<keyword id="KW-0173">Coenzyme A biosynthesis</keyword>
<keyword id="KW-0963">Cytoplasm</keyword>
<keyword id="KW-0460">Magnesium</keyword>
<keyword id="KW-0547">Nucleotide-binding</keyword>
<keyword id="KW-0548">Nucleotidyltransferase</keyword>
<keyword id="KW-1185">Reference proteome</keyword>
<keyword id="KW-0808">Transferase</keyword>
<evidence type="ECO:0000255" key="1">
    <source>
        <dbReference type="HAMAP-Rule" id="MF_00151"/>
    </source>
</evidence>
<dbReference type="EC" id="2.7.7.3" evidence="1"/>
<dbReference type="EMBL" id="CP000411">
    <property type="protein sequence ID" value="ABJ57133.1"/>
    <property type="molecule type" value="Genomic_DNA"/>
</dbReference>
<dbReference type="RefSeq" id="WP_002819126.1">
    <property type="nucleotide sequence ID" value="NC_008528.1"/>
</dbReference>
<dbReference type="SMR" id="Q04EI9"/>
<dbReference type="STRING" id="203123.OEOE_1259"/>
<dbReference type="GeneID" id="75065637"/>
<dbReference type="KEGG" id="ooe:OEOE_1259"/>
<dbReference type="eggNOG" id="COG0669">
    <property type="taxonomic scope" value="Bacteria"/>
</dbReference>
<dbReference type="HOGENOM" id="CLU_100149_1_1_9"/>
<dbReference type="UniPathway" id="UPA00241">
    <property type="reaction ID" value="UER00355"/>
</dbReference>
<dbReference type="Proteomes" id="UP000000774">
    <property type="component" value="Chromosome"/>
</dbReference>
<dbReference type="GO" id="GO:0005737">
    <property type="term" value="C:cytoplasm"/>
    <property type="evidence" value="ECO:0007669"/>
    <property type="project" value="UniProtKB-SubCell"/>
</dbReference>
<dbReference type="GO" id="GO:0005524">
    <property type="term" value="F:ATP binding"/>
    <property type="evidence" value="ECO:0007669"/>
    <property type="project" value="UniProtKB-KW"/>
</dbReference>
<dbReference type="GO" id="GO:0004595">
    <property type="term" value="F:pantetheine-phosphate adenylyltransferase activity"/>
    <property type="evidence" value="ECO:0007669"/>
    <property type="project" value="UniProtKB-UniRule"/>
</dbReference>
<dbReference type="GO" id="GO:0015937">
    <property type="term" value="P:coenzyme A biosynthetic process"/>
    <property type="evidence" value="ECO:0007669"/>
    <property type="project" value="UniProtKB-UniRule"/>
</dbReference>
<dbReference type="Gene3D" id="3.40.50.620">
    <property type="entry name" value="HUPs"/>
    <property type="match status" value="1"/>
</dbReference>
<dbReference type="HAMAP" id="MF_00151">
    <property type="entry name" value="PPAT_bact"/>
    <property type="match status" value="1"/>
</dbReference>
<dbReference type="InterPro" id="IPR004821">
    <property type="entry name" value="Cyt_trans-like"/>
</dbReference>
<dbReference type="InterPro" id="IPR001980">
    <property type="entry name" value="PPAT"/>
</dbReference>
<dbReference type="InterPro" id="IPR014729">
    <property type="entry name" value="Rossmann-like_a/b/a_fold"/>
</dbReference>
<dbReference type="NCBIfam" id="TIGR01510">
    <property type="entry name" value="coaD_prev_kdtB"/>
    <property type="match status" value="1"/>
</dbReference>
<dbReference type="NCBIfam" id="TIGR00125">
    <property type="entry name" value="cyt_tran_rel"/>
    <property type="match status" value="1"/>
</dbReference>
<dbReference type="PANTHER" id="PTHR21342">
    <property type="entry name" value="PHOSPHOPANTETHEINE ADENYLYLTRANSFERASE"/>
    <property type="match status" value="1"/>
</dbReference>
<dbReference type="PANTHER" id="PTHR21342:SF1">
    <property type="entry name" value="PHOSPHOPANTETHEINE ADENYLYLTRANSFERASE"/>
    <property type="match status" value="1"/>
</dbReference>
<dbReference type="Pfam" id="PF01467">
    <property type="entry name" value="CTP_transf_like"/>
    <property type="match status" value="1"/>
</dbReference>
<dbReference type="PRINTS" id="PR01020">
    <property type="entry name" value="LPSBIOSNTHSS"/>
</dbReference>
<dbReference type="SUPFAM" id="SSF52374">
    <property type="entry name" value="Nucleotidylyl transferase"/>
    <property type="match status" value="1"/>
</dbReference>
<reference key="1">
    <citation type="journal article" date="2006" name="Proc. Natl. Acad. Sci. U.S.A.">
        <title>Comparative genomics of the lactic acid bacteria.</title>
        <authorList>
            <person name="Makarova K.S."/>
            <person name="Slesarev A."/>
            <person name="Wolf Y.I."/>
            <person name="Sorokin A."/>
            <person name="Mirkin B."/>
            <person name="Koonin E.V."/>
            <person name="Pavlov A."/>
            <person name="Pavlova N."/>
            <person name="Karamychev V."/>
            <person name="Polouchine N."/>
            <person name="Shakhova V."/>
            <person name="Grigoriev I."/>
            <person name="Lou Y."/>
            <person name="Rohksar D."/>
            <person name="Lucas S."/>
            <person name="Huang K."/>
            <person name="Goodstein D.M."/>
            <person name="Hawkins T."/>
            <person name="Plengvidhya V."/>
            <person name="Welker D."/>
            <person name="Hughes J."/>
            <person name="Goh Y."/>
            <person name="Benson A."/>
            <person name="Baldwin K."/>
            <person name="Lee J.-H."/>
            <person name="Diaz-Muniz I."/>
            <person name="Dosti B."/>
            <person name="Smeianov V."/>
            <person name="Wechter W."/>
            <person name="Barabote R."/>
            <person name="Lorca G."/>
            <person name="Altermann E."/>
            <person name="Barrangou R."/>
            <person name="Ganesan B."/>
            <person name="Xie Y."/>
            <person name="Rawsthorne H."/>
            <person name="Tamir D."/>
            <person name="Parker C."/>
            <person name="Breidt F."/>
            <person name="Broadbent J.R."/>
            <person name="Hutkins R."/>
            <person name="O'Sullivan D."/>
            <person name="Steele J."/>
            <person name="Unlu G."/>
            <person name="Saier M.H. Jr."/>
            <person name="Klaenhammer T."/>
            <person name="Richardson P."/>
            <person name="Kozyavkin S."/>
            <person name="Weimer B.C."/>
            <person name="Mills D.A."/>
        </authorList>
    </citation>
    <scope>NUCLEOTIDE SEQUENCE [LARGE SCALE GENOMIC DNA]</scope>
    <source>
        <strain>ATCC BAA-331 / PSU-1</strain>
    </source>
</reference>
<name>COAD_OENOB</name>